<sequence length="295" mass="31245">MLSDSDRVRVLSEALPYLQAFAGRTFVVKYGGAAMKEEQLKDSVIRDIVFLSYVGIRPVVVHGGGPEINTWLAKLNIEPQFKNGLRVTDAATMDVVEMVLVGRVNKEIVTLINQAGGQAVGLCGKDGNLIRARAKGEESIGFVGEVQGVDTRVITALVEKGYIPVISSVAADDTGQAYNINADTVAGEIAAALGAEKLILLTDTAGILRDYRDPSTLIYRLDIAEARQLIKDGVVSGGMIPKVTCCVRSLAQGVKAAHIIDGRVPHALLLEIFTDSGIGSMLVGSNAAYDSAFSG</sequence>
<dbReference type="EC" id="2.7.2.8" evidence="1"/>
<dbReference type="EMBL" id="BA000039">
    <property type="protein sequence ID" value="BAC08960.1"/>
    <property type="molecule type" value="Genomic_DNA"/>
</dbReference>
<dbReference type="RefSeq" id="NP_682198.1">
    <property type="nucleotide sequence ID" value="NC_004113.1"/>
</dbReference>
<dbReference type="RefSeq" id="WP_011057248.1">
    <property type="nucleotide sequence ID" value="NC_004113.1"/>
</dbReference>
<dbReference type="SMR" id="P59303"/>
<dbReference type="STRING" id="197221.gene:10748007"/>
<dbReference type="EnsemblBacteria" id="BAC08960">
    <property type="protein sequence ID" value="BAC08960"/>
    <property type="gene ID" value="BAC08960"/>
</dbReference>
<dbReference type="KEGG" id="tel:tll1408"/>
<dbReference type="PATRIC" id="fig|197221.4.peg.1481"/>
<dbReference type="eggNOG" id="COG0548">
    <property type="taxonomic scope" value="Bacteria"/>
</dbReference>
<dbReference type="UniPathway" id="UPA00068">
    <property type="reaction ID" value="UER00107"/>
</dbReference>
<dbReference type="Proteomes" id="UP000000440">
    <property type="component" value="Chromosome"/>
</dbReference>
<dbReference type="GO" id="GO:0005737">
    <property type="term" value="C:cytoplasm"/>
    <property type="evidence" value="ECO:0007669"/>
    <property type="project" value="UniProtKB-SubCell"/>
</dbReference>
<dbReference type="GO" id="GO:0003991">
    <property type="term" value="F:acetylglutamate kinase activity"/>
    <property type="evidence" value="ECO:0007669"/>
    <property type="project" value="UniProtKB-UniRule"/>
</dbReference>
<dbReference type="GO" id="GO:0005524">
    <property type="term" value="F:ATP binding"/>
    <property type="evidence" value="ECO:0007669"/>
    <property type="project" value="UniProtKB-UniRule"/>
</dbReference>
<dbReference type="GO" id="GO:0042450">
    <property type="term" value="P:arginine biosynthetic process via ornithine"/>
    <property type="evidence" value="ECO:0007669"/>
    <property type="project" value="UniProtKB-UniRule"/>
</dbReference>
<dbReference type="GO" id="GO:0006526">
    <property type="term" value="P:L-arginine biosynthetic process"/>
    <property type="evidence" value="ECO:0007669"/>
    <property type="project" value="UniProtKB-UniPathway"/>
</dbReference>
<dbReference type="CDD" id="cd04250">
    <property type="entry name" value="AAK_NAGK-C"/>
    <property type="match status" value="1"/>
</dbReference>
<dbReference type="FunFam" id="3.40.1160.10:FF:000004">
    <property type="entry name" value="Acetylglutamate kinase"/>
    <property type="match status" value="1"/>
</dbReference>
<dbReference type="Gene3D" id="3.40.1160.10">
    <property type="entry name" value="Acetylglutamate kinase-like"/>
    <property type="match status" value="1"/>
</dbReference>
<dbReference type="HAMAP" id="MF_00082">
    <property type="entry name" value="ArgB"/>
    <property type="match status" value="1"/>
</dbReference>
<dbReference type="InterPro" id="IPR036393">
    <property type="entry name" value="AceGlu_kinase-like_sf"/>
</dbReference>
<dbReference type="InterPro" id="IPR004662">
    <property type="entry name" value="AcgluKinase_fam"/>
</dbReference>
<dbReference type="InterPro" id="IPR037528">
    <property type="entry name" value="ArgB"/>
</dbReference>
<dbReference type="InterPro" id="IPR001048">
    <property type="entry name" value="Asp/Glu/Uridylate_kinase"/>
</dbReference>
<dbReference type="InterPro" id="IPR001057">
    <property type="entry name" value="Glu/AcGlu_kinase"/>
</dbReference>
<dbReference type="InterPro" id="IPR041727">
    <property type="entry name" value="NAGK-C"/>
</dbReference>
<dbReference type="NCBIfam" id="TIGR00761">
    <property type="entry name" value="argB"/>
    <property type="match status" value="1"/>
</dbReference>
<dbReference type="PANTHER" id="PTHR23342">
    <property type="entry name" value="N-ACETYLGLUTAMATE SYNTHASE"/>
    <property type="match status" value="1"/>
</dbReference>
<dbReference type="PANTHER" id="PTHR23342:SF0">
    <property type="entry name" value="N-ACETYLGLUTAMATE SYNTHASE, MITOCHONDRIAL"/>
    <property type="match status" value="1"/>
</dbReference>
<dbReference type="Pfam" id="PF00696">
    <property type="entry name" value="AA_kinase"/>
    <property type="match status" value="1"/>
</dbReference>
<dbReference type="PIRSF" id="PIRSF000728">
    <property type="entry name" value="NAGK"/>
    <property type="match status" value="1"/>
</dbReference>
<dbReference type="PRINTS" id="PR00474">
    <property type="entry name" value="GLU5KINASE"/>
</dbReference>
<dbReference type="SUPFAM" id="SSF53633">
    <property type="entry name" value="Carbamate kinase-like"/>
    <property type="match status" value="1"/>
</dbReference>
<feature type="chain" id="PRO_0000112675" description="Acetylglutamate kinase">
    <location>
        <begin position="1"/>
        <end position="295"/>
    </location>
</feature>
<feature type="binding site" evidence="1">
    <location>
        <begin position="64"/>
        <end position="65"/>
    </location>
    <ligand>
        <name>substrate</name>
    </ligand>
</feature>
<feature type="binding site" evidence="1">
    <location>
        <position position="86"/>
    </location>
    <ligand>
        <name>substrate</name>
    </ligand>
</feature>
<feature type="binding site" evidence="1">
    <location>
        <position position="179"/>
    </location>
    <ligand>
        <name>substrate</name>
    </ligand>
</feature>
<feature type="site" description="Transition state stabilizer" evidence="1">
    <location>
        <position position="29"/>
    </location>
</feature>
<feature type="site" description="Transition state stabilizer" evidence="1">
    <location>
        <position position="242"/>
    </location>
</feature>
<keyword id="KW-0028">Amino-acid biosynthesis</keyword>
<keyword id="KW-0055">Arginine biosynthesis</keyword>
<keyword id="KW-0067">ATP-binding</keyword>
<keyword id="KW-0963">Cytoplasm</keyword>
<keyword id="KW-0418">Kinase</keyword>
<keyword id="KW-0547">Nucleotide-binding</keyword>
<keyword id="KW-1185">Reference proteome</keyword>
<keyword id="KW-0808">Transferase</keyword>
<gene>
    <name evidence="1" type="primary">argB</name>
    <name type="ordered locus">tll1408</name>
</gene>
<protein>
    <recommendedName>
        <fullName evidence="1">Acetylglutamate kinase</fullName>
        <ecNumber evidence="1">2.7.2.8</ecNumber>
    </recommendedName>
    <alternativeName>
        <fullName evidence="1">N-acetyl-L-glutamate 5-phosphotransferase</fullName>
    </alternativeName>
    <alternativeName>
        <fullName evidence="1">NAG kinase</fullName>
        <shortName evidence="1">NAGK</shortName>
    </alternativeName>
</protein>
<comment type="function">
    <text evidence="1">Catalyzes the ATP-dependent phosphorylation of N-acetyl-L-glutamate.</text>
</comment>
<comment type="catalytic activity">
    <reaction evidence="1">
        <text>N-acetyl-L-glutamate + ATP = N-acetyl-L-glutamyl 5-phosphate + ADP</text>
        <dbReference type="Rhea" id="RHEA:14629"/>
        <dbReference type="ChEBI" id="CHEBI:30616"/>
        <dbReference type="ChEBI" id="CHEBI:44337"/>
        <dbReference type="ChEBI" id="CHEBI:57936"/>
        <dbReference type="ChEBI" id="CHEBI:456216"/>
        <dbReference type="EC" id="2.7.2.8"/>
    </reaction>
</comment>
<comment type="pathway">
    <text evidence="1">Amino-acid biosynthesis; L-arginine biosynthesis; N(2)-acetyl-L-ornithine from L-glutamate: step 2/4.</text>
</comment>
<comment type="subcellular location">
    <subcellularLocation>
        <location evidence="1">Cytoplasm</location>
    </subcellularLocation>
</comment>
<comment type="similarity">
    <text evidence="1">Belongs to the acetylglutamate kinase family. ArgB subfamily.</text>
</comment>
<proteinExistence type="inferred from homology"/>
<organism>
    <name type="scientific">Thermosynechococcus vestitus (strain NIES-2133 / IAM M-273 / BP-1)</name>
    <dbReference type="NCBI Taxonomy" id="197221"/>
    <lineage>
        <taxon>Bacteria</taxon>
        <taxon>Bacillati</taxon>
        <taxon>Cyanobacteriota</taxon>
        <taxon>Cyanophyceae</taxon>
        <taxon>Acaryochloridales</taxon>
        <taxon>Thermosynechococcaceae</taxon>
        <taxon>Thermosynechococcus</taxon>
    </lineage>
</organism>
<name>ARGB_THEVB</name>
<evidence type="ECO:0000255" key="1">
    <source>
        <dbReference type="HAMAP-Rule" id="MF_00082"/>
    </source>
</evidence>
<accession>P59303</accession>
<reference key="1">
    <citation type="journal article" date="2002" name="DNA Res.">
        <title>Complete genome structure of the thermophilic cyanobacterium Thermosynechococcus elongatus BP-1.</title>
        <authorList>
            <person name="Nakamura Y."/>
            <person name="Kaneko T."/>
            <person name="Sato S."/>
            <person name="Ikeuchi M."/>
            <person name="Katoh H."/>
            <person name="Sasamoto S."/>
            <person name="Watanabe A."/>
            <person name="Iriguchi M."/>
            <person name="Kawashima K."/>
            <person name="Kimura T."/>
            <person name="Kishida Y."/>
            <person name="Kiyokawa C."/>
            <person name="Kohara M."/>
            <person name="Matsumoto M."/>
            <person name="Matsuno A."/>
            <person name="Nakazaki N."/>
            <person name="Shimpo S."/>
            <person name="Sugimoto M."/>
            <person name="Takeuchi C."/>
            <person name="Yamada M."/>
            <person name="Tabata S."/>
        </authorList>
    </citation>
    <scope>NUCLEOTIDE SEQUENCE [LARGE SCALE GENOMIC DNA]</scope>
    <source>
        <strain>NIES-2133 / IAM M-273 / BP-1</strain>
    </source>
</reference>